<name>MDTI_CROS8</name>
<proteinExistence type="inferred from homology"/>
<comment type="function">
    <text evidence="1">Catalyzes the excretion of spermidine.</text>
</comment>
<comment type="subunit">
    <text evidence="1">Forms a complex with MdtJ.</text>
</comment>
<comment type="subcellular location">
    <subcellularLocation>
        <location evidence="1">Cell inner membrane</location>
        <topology evidence="1">Multi-pass membrane protein</topology>
    </subcellularLocation>
</comment>
<comment type="similarity">
    <text evidence="3">Belongs to the drug/metabolite transporter (DMT) superfamily. Small multidrug resistance (SMR) (TC 2.A.7.1) family. MdtI subfamily.</text>
</comment>
<organism>
    <name type="scientific">Cronobacter sakazakii (strain ATCC BAA-894)</name>
    <name type="common">Enterobacter sakazakii</name>
    <dbReference type="NCBI Taxonomy" id="290339"/>
    <lineage>
        <taxon>Bacteria</taxon>
        <taxon>Pseudomonadati</taxon>
        <taxon>Pseudomonadota</taxon>
        <taxon>Gammaproteobacteria</taxon>
        <taxon>Enterobacterales</taxon>
        <taxon>Enterobacteriaceae</taxon>
        <taxon>Cronobacter</taxon>
    </lineage>
</organism>
<feature type="chain" id="PRO_0000331135" description="Spermidine export protein MdtI">
    <location>
        <begin position="1"/>
        <end position="109"/>
    </location>
</feature>
<feature type="transmembrane region" description="Helical" evidence="2">
    <location>
        <begin position="6"/>
        <end position="26"/>
    </location>
</feature>
<feature type="transmembrane region" description="Helical" evidence="2">
    <location>
        <begin position="36"/>
        <end position="56"/>
    </location>
</feature>
<feature type="transmembrane region" description="Helical" evidence="2">
    <location>
        <begin position="64"/>
        <end position="84"/>
    </location>
</feature>
<feature type="transmembrane region" description="Helical" evidence="2">
    <location>
        <begin position="88"/>
        <end position="108"/>
    </location>
</feature>
<sequence length="109" mass="11595">MSQVELQHILWLLLAIGLEIIANIWLKFSDGFRRPVYGVASLAAVLAAFSALGQAVEGIDLAVAYALWGGFGIAATVAAGWIMFGQRLNRKGWAGLGLLLVGMVIIKLA</sequence>
<gene>
    <name type="primary">mdtI</name>
    <name type="ordered locus">ESA_01730</name>
</gene>
<keyword id="KW-0997">Cell inner membrane</keyword>
<keyword id="KW-1003">Cell membrane</keyword>
<keyword id="KW-0472">Membrane</keyword>
<keyword id="KW-1185">Reference proteome</keyword>
<keyword id="KW-0812">Transmembrane</keyword>
<keyword id="KW-1133">Transmembrane helix</keyword>
<keyword id="KW-0813">Transport</keyword>
<protein>
    <recommendedName>
        <fullName>Spermidine export protein MdtI</fullName>
    </recommendedName>
</protein>
<accession>A7MEJ5</accession>
<evidence type="ECO:0000250" key="1"/>
<evidence type="ECO:0000255" key="2"/>
<evidence type="ECO:0000255" key="3">
    <source>
        <dbReference type="HAMAP-Rule" id="MF_01597"/>
    </source>
</evidence>
<dbReference type="EMBL" id="CP000783">
    <property type="protein sequence ID" value="ABU76984.1"/>
    <property type="molecule type" value="Genomic_DNA"/>
</dbReference>
<dbReference type="RefSeq" id="WP_007775321.1">
    <property type="nucleotide sequence ID" value="NC_009778.1"/>
</dbReference>
<dbReference type="SMR" id="A7MEJ5"/>
<dbReference type="GeneID" id="56730552"/>
<dbReference type="KEGG" id="esa:ESA_01730"/>
<dbReference type="HOGENOM" id="CLU_133067_0_4_6"/>
<dbReference type="Proteomes" id="UP000000260">
    <property type="component" value="Chromosome"/>
</dbReference>
<dbReference type="GO" id="GO:0005886">
    <property type="term" value="C:plasma membrane"/>
    <property type="evidence" value="ECO:0007669"/>
    <property type="project" value="UniProtKB-SubCell"/>
</dbReference>
<dbReference type="GO" id="GO:0015199">
    <property type="term" value="F:amino-acid betaine transmembrane transporter activity"/>
    <property type="evidence" value="ECO:0007669"/>
    <property type="project" value="TreeGrafter"/>
</dbReference>
<dbReference type="GO" id="GO:0015297">
    <property type="term" value="F:antiporter activity"/>
    <property type="evidence" value="ECO:0007669"/>
    <property type="project" value="TreeGrafter"/>
</dbReference>
<dbReference type="GO" id="GO:0015220">
    <property type="term" value="F:choline transmembrane transporter activity"/>
    <property type="evidence" value="ECO:0007669"/>
    <property type="project" value="TreeGrafter"/>
</dbReference>
<dbReference type="GO" id="GO:0031460">
    <property type="term" value="P:glycine betaine transport"/>
    <property type="evidence" value="ECO:0007669"/>
    <property type="project" value="TreeGrafter"/>
</dbReference>
<dbReference type="GO" id="GO:1903711">
    <property type="term" value="P:spermidine transmembrane transport"/>
    <property type="evidence" value="ECO:0007669"/>
    <property type="project" value="TreeGrafter"/>
</dbReference>
<dbReference type="FunFam" id="1.10.3730.20:FF:000001">
    <property type="entry name" value="Quaternary ammonium compound resistance transporter SugE"/>
    <property type="match status" value="1"/>
</dbReference>
<dbReference type="Gene3D" id="1.10.3730.20">
    <property type="match status" value="1"/>
</dbReference>
<dbReference type="InterPro" id="IPR000390">
    <property type="entry name" value="Small_drug/metabolite_transptr"/>
</dbReference>
<dbReference type="InterPro" id="IPR045324">
    <property type="entry name" value="Small_multidrug_res"/>
</dbReference>
<dbReference type="NCBIfam" id="NF007934">
    <property type="entry name" value="PRK10650.1"/>
    <property type="match status" value="1"/>
</dbReference>
<dbReference type="PANTHER" id="PTHR30561">
    <property type="entry name" value="SMR FAMILY PROTON-DEPENDENT DRUG EFFLUX TRANSPORTER SUGE"/>
    <property type="match status" value="1"/>
</dbReference>
<dbReference type="PANTHER" id="PTHR30561:SF6">
    <property type="entry name" value="SPERMIDINE EXPORT PROTEIN MDTI"/>
    <property type="match status" value="1"/>
</dbReference>
<dbReference type="Pfam" id="PF00893">
    <property type="entry name" value="Multi_Drug_Res"/>
    <property type="match status" value="1"/>
</dbReference>
<dbReference type="SUPFAM" id="SSF103481">
    <property type="entry name" value="Multidrug resistance efflux transporter EmrE"/>
    <property type="match status" value="1"/>
</dbReference>
<reference key="1">
    <citation type="journal article" date="2010" name="PLoS ONE">
        <title>Genome sequence of Cronobacter sakazakii BAA-894 and comparative genomic hybridization analysis with other Cronobacter species.</title>
        <authorList>
            <person name="Kucerova E."/>
            <person name="Clifton S.W."/>
            <person name="Xia X.Q."/>
            <person name="Long F."/>
            <person name="Porwollik S."/>
            <person name="Fulton L."/>
            <person name="Fronick C."/>
            <person name="Minx P."/>
            <person name="Kyung K."/>
            <person name="Warren W."/>
            <person name="Fulton R."/>
            <person name="Feng D."/>
            <person name="Wollam A."/>
            <person name="Shah N."/>
            <person name="Bhonagiri V."/>
            <person name="Nash W.E."/>
            <person name="Hallsworth-Pepin K."/>
            <person name="Wilson R.K."/>
            <person name="McClelland M."/>
            <person name="Forsythe S.J."/>
        </authorList>
    </citation>
    <scope>NUCLEOTIDE SEQUENCE [LARGE SCALE GENOMIC DNA]</scope>
    <source>
        <strain>ATCC BAA-894</strain>
    </source>
</reference>